<gene>
    <name evidence="1" type="primary">rnc</name>
    <name type="ordered locus">C8J_1537</name>
</gene>
<keyword id="KW-0963">Cytoplasm</keyword>
<keyword id="KW-0255">Endonuclease</keyword>
<keyword id="KW-0378">Hydrolase</keyword>
<keyword id="KW-0460">Magnesium</keyword>
<keyword id="KW-0479">Metal-binding</keyword>
<keyword id="KW-0507">mRNA processing</keyword>
<keyword id="KW-0540">Nuclease</keyword>
<keyword id="KW-0694">RNA-binding</keyword>
<keyword id="KW-0698">rRNA processing</keyword>
<keyword id="KW-0699">rRNA-binding</keyword>
<keyword id="KW-0819">tRNA processing</keyword>
<proteinExistence type="inferred from homology"/>
<reference key="1">
    <citation type="journal article" date="2007" name="J. Bacteriol.">
        <title>The complete genome sequence of Campylobacter jejuni strain 81116 (NCTC11828).</title>
        <authorList>
            <person name="Pearson B.M."/>
            <person name="Gaskin D.J.H."/>
            <person name="Segers R.P.A.M."/>
            <person name="Wells J.M."/>
            <person name="Nuijten P.J.M."/>
            <person name="van Vliet A.H.M."/>
        </authorList>
    </citation>
    <scope>NUCLEOTIDE SEQUENCE [LARGE SCALE GENOMIC DNA]</scope>
    <source>
        <strain>81116 / NCTC 11828</strain>
    </source>
</reference>
<protein>
    <recommendedName>
        <fullName evidence="1">Ribonuclease 3</fullName>
        <ecNumber evidence="1">3.1.26.3</ecNumber>
    </recommendedName>
    <alternativeName>
        <fullName evidence="1">Ribonuclease III</fullName>
        <shortName evidence="1">RNase III</shortName>
    </alternativeName>
</protein>
<evidence type="ECO:0000255" key="1">
    <source>
        <dbReference type="HAMAP-Rule" id="MF_00104"/>
    </source>
</evidence>
<sequence length="224" mass="24998">MKNIEKLEQSLTYEFKDKNLLIHALTHKSFKKSYNNERLEFLGDAVLDLVVGEYLFHKFAKDAEGDLSKLRAALVNEKSFAKIANSLNLGDFIFMSVAEENNGGKEKPSILSDALEAIIGAIHLEAGFEFAKTIALRLIEKNFPQIDAKILIKDYKTKLQEITQGKIGQTPQYETVRAFGPDHLKQFEIALMLDGKELARAIAGSKKEAQQMAAKIALEKLGAL</sequence>
<accession>A8FNU7</accession>
<name>RNC_CAMJ8</name>
<organism>
    <name type="scientific">Campylobacter jejuni subsp. jejuni serotype O:6 (strain 81116 / NCTC 11828)</name>
    <dbReference type="NCBI Taxonomy" id="407148"/>
    <lineage>
        <taxon>Bacteria</taxon>
        <taxon>Pseudomonadati</taxon>
        <taxon>Campylobacterota</taxon>
        <taxon>Epsilonproteobacteria</taxon>
        <taxon>Campylobacterales</taxon>
        <taxon>Campylobacteraceae</taxon>
        <taxon>Campylobacter</taxon>
    </lineage>
</organism>
<comment type="function">
    <text evidence="1">Digests double-stranded RNA. Involved in the processing of primary rRNA transcript to yield the immediate precursors to the large and small rRNAs (23S and 16S). Processes some mRNAs, and tRNAs when they are encoded in the rRNA operon. Processes pre-crRNA and tracrRNA of type II CRISPR loci if present in the organism.</text>
</comment>
<comment type="catalytic activity">
    <reaction evidence="1">
        <text>Endonucleolytic cleavage to 5'-phosphomonoester.</text>
        <dbReference type="EC" id="3.1.26.3"/>
    </reaction>
</comment>
<comment type="cofactor">
    <cofactor evidence="1">
        <name>Mg(2+)</name>
        <dbReference type="ChEBI" id="CHEBI:18420"/>
    </cofactor>
</comment>
<comment type="subunit">
    <text evidence="1">Homodimer.</text>
</comment>
<comment type="subcellular location">
    <subcellularLocation>
        <location evidence="1">Cytoplasm</location>
    </subcellularLocation>
</comment>
<comment type="similarity">
    <text evidence="1">Belongs to the ribonuclease III family.</text>
</comment>
<dbReference type="EC" id="3.1.26.3" evidence="1"/>
<dbReference type="EMBL" id="CP000814">
    <property type="protein sequence ID" value="ABV53134.1"/>
    <property type="molecule type" value="Genomic_DNA"/>
</dbReference>
<dbReference type="RefSeq" id="WP_002862275.1">
    <property type="nucleotide sequence ID" value="NC_009839.1"/>
</dbReference>
<dbReference type="SMR" id="A8FNU7"/>
<dbReference type="KEGG" id="cju:C8J_1537"/>
<dbReference type="HOGENOM" id="CLU_000907_1_3_7"/>
<dbReference type="GO" id="GO:0005737">
    <property type="term" value="C:cytoplasm"/>
    <property type="evidence" value="ECO:0007669"/>
    <property type="project" value="UniProtKB-SubCell"/>
</dbReference>
<dbReference type="GO" id="GO:0003725">
    <property type="term" value="F:double-stranded RNA binding"/>
    <property type="evidence" value="ECO:0007669"/>
    <property type="project" value="TreeGrafter"/>
</dbReference>
<dbReference type="GO" id="GO:0046872">
    <property type="term" value="F:metal ion binding"/>
    <property type="evidence" value="ECO:0007669"/>
    <property type="project" value="UniProtKB-KW"/>
</dbReference>
<dbReference type="GO" id="GO:0004525">
    <property type="term" value="F:ribonuclease III activity"/>
    <property type="evidence" value="ECO:0007669"/>
    <property type="project" value="UniProtKB-UniRule"/>
</dbReference>
<dbReference type="GO" id="GO:0019843">
    <property type="term" value="F:rRNA binding"/>
    <property type="evidence" value="ECO:0007669"/>
    <property type="project" value="UniProtKB-KW"/>
</dbReference>
<dbReference type="GO" id="GO:0006397">
    <property type="term" value="P:mRNA processing"/>
    <property type="evidence" value="ECO:0007669"/>
    <property type="project" value="UniProtKB-UniRule"/>
</dbReference>
<dbReference type="GO" id="GO:0010468">
    <property type="term" value="P:regulation of gene expression"/>
    <property type="evidence" value="ECO:0007669"/>
    <property type="project" value="TreeGrafter"/>
</dbReference>
<dbReference type="GO" id="GO:0006364">
    <property type="term" value="P:rRNA processing"/>
    <property type="evidence" value="ECO:0007669"/>
    <property type="project" value="UniProtKB-UniRule"/>
</dbReference>
<dbReference type="GO" id="GO:0008033">
    <property type="term" value="P:tRNA processing"/>
    <property type="evidence" value="ECO:0007669"/>
    <property type="project" value="UniProtKB-KW"/>
</dbReference>
<dbReference type="CDD" id="cd10845">
    <property type="entry name" value="DSRM_RNAse_III_family"/>
    <property type="match status" value="1"/>
</dbReference>
<dbReference type="CDD" id="cd00593">
    <property type="entry name" value="RIBOc"/>
    <property type="match status" value="1"/>
</dbReference>
<dbReference type="FunFam" id="1.10.1520.10:FF:000001">
    <property type="entry name" value="Ribonuclease 3"/>
    <property type="match status" value="1"/>
</dbReference>
<dbReference type="Gene3D" id="3.30.160.20">
    <property type="match status" value="1"/>
</dbReference>
<dbReference type="Gene3D" id="1.10.1520.10">
    <property type="entry name" value="Ribonuclease III domain"/>
    <property type="match status" value="1"/>
</dbReference>
<dbReference type="HAMAP" id="MF_00104">
    <property type="entry name" value="RNase_III"/>
    <property type="match status" value="1"/>
</dbReference>
<dbReference type="InterPro" id="IPR014720">
    <property type="entry name" value="dsRBD_dom"/>
</dbReference>
<dbReference type="InterPro" id="IPR011907">
    <property type="entry name" value="RNase_III"/>
</dbReference>
<dbReference type="InterPro" id="IPR000999">
    <property type="entry name" value="RNase_III_dom"/>
</dbReference>
<dbReference type="InterPro" id="IPR036389">
    <property type="entry name" value="RNase_III_sf"/>
</dbReference>
<dbReference type="NCBIfam" id="TIGR02191">
    <property type="entry name" value="RNaseIII"/>
    <property type="match status" value="1"/>
</dbReference>
<dbReference type="PANTHER" id="PTHR11207:SF0">
    <property type="entry name" value="RIBONUCLEASE 3"/>
    <property type="match status" value="1"/>
</dbReference>
<dbReference type="PANTHER" id="PTHR11207">
    <property type="entry name" value="RIBONUCLEASE III"/>
    <property type="match status" value="1"/>
</dbReference>
<dbReference type="Pfam" id="PF00035">
    <property type="entry name" value="dsrm"/>
    <property type="match status" value="1"/>
</dbReference>
<dbReference type="Pfam" id="PF14622">
    <property type="entry name" value="Ribonucleas_3_3"/>
    <property type="match status" value="1"/>
</dbReference>
<dbReference type="SMART" id="SM00358">
    <property type="entry name" value="DSRM"/>
    <property type="match status" value="1"/>
</dbReference>
<dbReference type="SMART" id="SM00535">
    <property type="entry name" value="RIBOc"/>
    <property type="match status" value="1"/>
</dbReference>
<dbReference type="SUPFAM" id="SSF54768">
    <property type="entry name" value="dsRNA-binding domain-like"/>
    <property type="match status" value="1"/>
</dbReference>
<dbReference type="SUPFAM" id="SSF69065">
    <property type="entry name" value="RNase III domain-like"/>
    <property type="match status" value="1"/>
</dbReference>
<dbReference type="PROSITE" id="PS50137">
    <property type="entry name" value="DS_RBD"/>
    <property type="match status" value="1"/>
</dbReference>
<dbReference type="PROSITE" id="PS00517">
    <property type="entry name" value="RNASE_3_1"/>
    <property type="match status" value="1"/>
</dbReference>
<dbReference type="PROSITE" id="PS50142">
    <property type="entry name" value="RNASE_3_2"/>
    <property type="match status" value="1"/>
</dbReference>
<feature type="chain" id="PRO_1000075735" description="Ribonuclease 3">
    <location>
        <begin position="1"/>
        <end position="224"/>
    </location>
</feature>
<feature type="domain" description="RNase III" evidence="1">
    <location>
        <begin position="4"/>
        <end position="127"/>
    </location>
</feature>
<feature type="domain" description="DRBM" evidence="1">
    <location>
        <begin position="154"/>
        <end position="223"/>
    </location>
</feature>
<feature type="active site" evidence="1">
    <location>
        <position position="44"/>
    </location>
</feature>
<feature type="active site" evidence="1">
    <location>
        <position position="116"/>
    </location>
</feature>
<feature type="binding site" evidence="1">
    <location>
        <position position="40"/>
    </location>
    <ligand>
        <name>Mg(2+)</name>
        <dbReference type="ChEBI" id="CHEBI:18420"/>
    </ligand>
</feature>
<feature type="binding site" evidence="1">
    <location>
        <position position="113"/>
    </location>
    <ligand>
        <name>Mg(2+)</name>
        <dbReference type="ChEBI" id="CHEBI:18420"/>
    </ligand>
</feature>
<feature type="binding site" evidence="1">
    <location>
        <position position="116"/>
    </location>
    <ligand>
        <name>Mg(2+)</name>
        <dbReference type="ChEBI" id="CHEBI:18420"/>
    </ligand>
</feature>